<proteinExistence type="inferred from homology"/>
<keyword id="KW-0014">AIDS</keyword>
<keyword id="KW-0167">Capsid protein</keyword>
<keyword id="KW-1032">Host cell membrane</keyword>
<keyword id="KW-1035">Host cytoplasm</keyword>
<keyword id="KW-1039">Host endosome</keyword>
<keyword id="KW-1043">Host membrane</keyword>
<keyword id="KW-1048">Host nucleus</keyword>
<keyword id="KW-0945">Host-virus interaction</keyword>
<keyword id="KW-0449">Lipoprotein</keyword>
<keyword id="KW-0472">Membrane</keyword>
<keyword id="KW-0479">Metal-binding</keyword>
<keyword id="KW-0488">Methylation</keyword>
<keyword id="KW-0519">Myristate</keyword>
<keyword id="KW-0597">Phosphoprotein</keyword>
<keyword id="KW-1185">Reference proteome</keyword>
<keyword id="KW-0677">Repeat</keyword>
<keyword id="KW-0688">Ribosomal frameshifting</keyword>
<keyword id="KW-0694">RNA-binding</keyword>
<keyword id="KW-1198">Viral budding</keyword>
<keyword id="KW-1187">Viral budding via the host ESCRT complexes</keyword>
<keyword id="KW-0543">Viral nucleoprotein</keyword>
<keyword id="KW-1188">Viral release from host cell</keyword>
<keyword id="KW-0946">Virion</keyword>
<keyword id="KW-0862">Zinc</keyword>
<keyword id="KW-0863">Zinc-finger</keyword>
<sequence>MGARASVLSGGKLDAWEKIRLRPGGKKKYRLKHLVWASRELERFALNPGLLETGEGCQQIMEQLQSTLKTGSEEIKSLYNTVATLYCVHQRIDVKDTKEALDKIEEIQNKSRQKTQQAAAAQQAAAATKNSSSVSQNYPIVQNAQGQMIHQAISPRTLNAWVKVIEEKAFSPEVIPMFSALSEGATPQDLNMMLNIVGGHQAAMQMLKDTINEEAADWDRVHPVHAGPIPPGQMREPRGSDIAGTTSTLQEQIGWMTSNPPIPVGDIYKRWIILGLNKIVRMYSPVSILDIRQGPKEPFRDYVDRFFKTLRAEQATQEVKNWMTETLLVQNANPDCKTILKALGPGATLEEMMTACQGVGGPSHKARVLAEAMSQATNSTAAIMMQRGNFKGQKRIKCFNCGKEGHLARNCRAPRKKGCWKCGKEGHQMKDCTERQANFLGKIWPSHKGRPGNFLQSRPEPTAPPAESFGFGEEIKPSQKQEQKDKELYPLASLKSLFGNDQLSQ</sequence>
<name>GAG_HV1MA</name>
<comment type="function">
    <molecule>Gag polyprotein</molecule>
    <text evidence="5">Mediates, with Gag-Pol polyprotein, the essential events in virion assembly, including binding the plasma membrane, making the protein-protein interactions necessary to create spherical particles, recruiting the viral Env proteins, and packaging the genomic RNA via direct interactions with the RNA packaging sequence (Psi).</text>
</comment>
<comment type="function">
    <molecule>Matrix protein p17</molecule>
    <text evidence="1 6">Targets the polyprotein to the plasma membrane via a multipartite membrane-binding signal, that includes its myristoylated N-terminus (By similarity). Matrix protein is part of the pre-integration complex. Implicated in the release from host cell mediated by Vpu. Binds to RNA (By similarity).</text>
</comment>
<comment type="function">
    <molecule>Capsid protein p24</molecule>
    <text evidence="5 6">Forms the conical core that encapsulates the genomic RNA-nucleocapsid complex in the virion. Most core are conical, with only 7% tubular. The core is constituted by capsid protein hexamer subunits. The core is disassembled soon after virion entry (By similarity). The capsid promotes immune invasion by cloaking viral DNA from CGAS detection (By similarity). Host restriction factors such as TRIM5-alpha or TRIMCyp bind retroviral capsids and cause premature capsid disassembly, leading to blocks in reverse transcription. Capsid restriction by TRIM5 is one of the factors which restricts HIV-1 to the human species. Host PIN1 apparently facilitates the virion uncoating (By similarity). On the other hand, interactions with PDZD8 or CYPA stabilize the capsid (By similarity).</text>
</comment>
<comment type="function">
    <molecule>Nucleocapsid protein p7</molecule>
    <text evidence="5">Encapsulates and protects viral dimeric unspliced genomic RNA (gRNA). Binds these RNAs through its zinc fingers. Acts as a nucleic acid chaperone which is involved in rearangement of nucleic acid secondary structure during gRNA retrotranscription. Also facilitates template switch leading to recombination. As part of the polyprotein, participates in gRNA dimerization, packaging, tRNA incorporation and virion assembly.</text>
</comment>
<comment type="function">
    <molecule>p6-gag</molecule>
    <text evidence="6">Plays a role in budding of the assembled particle by interacting with the host class E VPS proteins TSG101 and PDCD6IP/AIP1.</text>
</comment>
<comment type="subunit">
    <molecule>Gag polyprotein</molecule>
    <text evidence="4 5">Homotrimer; further assembles as hexamers of trimers. Oligomerization possibly creates a central hole into which the cytoplasmic tail of the gp41 envelope protein may be inserted. Interacts with host TRIM22; this interaction seems to disrupt proper trafficking of Gag polyprotein and may interfere with budding. Interacts with host PDZD8. When ubiquitinated, interacts (via p6-gag domain) with host PACSIN2; this interaction allows PACSIN2 recruitment to viral assembly sites and its subsequent incorporation into virions. Interacts with MOV10 (By similarity).</text>
</comment>
<comment type="subunit">
    <molecule>Matrix protein p17</molecule>
    <text evidence="5 6">Homotrimer; further assembles as hexamers of trimers. Interacts with gp41 (via C-terminus). Interacts with host CALM1; this interaction induces a conformational change in the Matrix protein, triggering exposure of the myristate group. Interacts with host AP3D1; this interaction allows the polyprotein trafficking to multivesicular bodies during virus assembly. Part of the pre-integration complex (PIC) which is composed of viral genome, matrix protein, Vpr and integrase.</text>
</comment>
<comment type="subunit">
    <molecule>Capsid protein p24</molecule>
    <text evidence="5 6">Homodimer; the homodimer further multimerizes as homohexamers or homopentamers (By similarity). Interacts with host NUP98 (By similarity). Interacts with host PPIA/CYPA; this interaction stabilizes the capsid (By similarity). Interacts with host NUP153 (By similarity). Interacts with host PDZD8; this interaction stabilizes the capsid. Interacts with host TRIM5; this interaction destabilizes the capsid (By similarity). Interacts with host CPSF6 (By similarity). Interacts with host NONO; the interaction is weak (By similarity).</text>
</comment>
<comment type="subunit">
    <molecule>Nucleocapsid protein p7</molecule>
    <text evidence="6">Interacts with host NUP98.</text>
</comment>
<comment type="subunit">
    <molecule>p6-gag</molecule>
    <text evidence="3 6">Interacts with Vpr; this interaction allows Vpr incorporation into the virion. Interacts with host TSG101. p6-gag interacts with host PDCD6IP/AIP1.</text>
</comment>
<comment type="subcellular location">
    <molecule>Gag polyprotein</molecule>
    <subcellularLocation>
        <location evidence="6">Host cell membrane</location>
        <topology evidence="6">Lipid-anchor</topology>
    </subcellularLocation>
    <subcellularLocation>
        <location evidence="6">Host endosome</location>
        <location evidence="6">Host multivesicular body</location>
    </subcellularLocation>
    <text evidence="6">These locations are probably linked to virus assembly sites. The main location is the cell membrane, but under some circumstances, late endosomal compartments can serve as productive sites for virion assembly.</text>
</comment>
<comment type="subcellular location">
    <molecule>Matrix protein p17</molecule>
    <subcellularLocation>
        <location evidence="6">Virion membrane</location>
        <topology evidence="6">Lipid-anchor</topology>
    </subcellularLocation>
    <subcellularLocation>
        <location evidence="1">Host nucleus</location>
    </subcellularLocation>
    <subcellularLocation>
        <location evidence="1">Host cytoplasm</location>
    </subcellularLocation>
</comment>
<comment type="subcellular location">
    <molecule>Capsid protein p24</molecule>
    <subcellularLocation>
        <location evidence="6">Virion</location>
    </subcellularLocation>
</comment>
<comment type="subcellular location">
    <molecule>Nucleocapsid protein p7</molecule>
    <subcellularLocation>
        <location evidence="6">Virion</location>
    </subcellularLocation>
</comment>
<comment type="alternative products">
    <event type="ribosomal frameshifting"/>
    <isoform>
        <id>P04594-1</id>
        <name>Gag polyprotein</name>
        <sequence type="displayed"/>
    </isoform>
    <isoform>
        <id>P04588-1</id>
        <name>Gag-Pol polyprotein</name>
        <sequence type="external"/>
    </isoform>
    <text>Translation results in the formation of the Gag polyprotein most of the time. Ribosomal frameshifting at the gag-pol genes boundary occurs at low frequency and produces the Gag-Pol polyprotein. This strategy of translation probably allows the virus to modulate the quantity of each viral protein. Maintenance of a correct Gag to Gag-Pol ratio is essential for RNA dimerization and viral infectivity.</text>
</comment>
<comment type="domain">
    <text evidence="6">Late-budding domains (L domains) are short sequence motifs essential for viral particle budding. They recruit proteins of the host ESCRT machinery (Endosomal Sorting Complex Required for Transport) or ESCRT-associated proteins. p6-gag contains two L domains: a PTAP/PSAP motif, which interacts with the UEV domain of TSG101 and a LYPX(n)L motif which interacts with PDCD6IP/AIP1.</text>
</comment>
<comment type="PTM">
    <text evidence="6">Gag-Pol polyprotein: Specific enzymatic cleavages by the viral protease yield mature proteins.</text>
</comment>
<comment type="PTM">
    <molecule>Matrix protein p17</molecule>
    <text evidence="5">Tyrosine phosphorylated presumably in the virion by a host kinase. Phosphorylation is apparently not a major regulator of membrane association.</text>
</comment>
<comment type="PTM">
    <text evidence="6">Capsid protein p24 is phosphorylated possibly by host MAPK1; this phosphorylation is necessary for Pin1-mediated virion uncoating.</text>
</comment>
<comment type="PTM">
    <text evidence="2">Nucleocapsid protein p7 is methylated by host PRMT6, impairing its function by reducing RNA annealing and the initiation of reverse transcription.</text>
</comment>
<comment type="miscellaneous">
    <text>HIV-1 lineages are divided in three main groups, M (for Major), O (for Outlier), and N (for New, or Non-M, Non-O). The vast majority of strains found worldwide belong to the group M. Group O seems to be endemic to and largely confined to Cameroon and neighboring countries in West Central Africa, where these viruses represent a small minority of HIV-1 strains. The group N is represented by a limited number of isolates from Cameroonian persons. The group M is further subdivided in 9 clades or subtypes (A to D, F to H, J and K).</text>
</comment>
<comment type="miscellaneous">
    <molecule>Isoform Gag polyprotein</molecule>
    <text>Produced by conventional translation.</text>
</comment>
<comment type="similarity">
    <text evidence="10">Belongs to the primate lentivirus group gag polyprotein family.</text>
</comment>
<accession>P04594</accession>
<protein>
    <recommendedName>
        <fullName>Gag polyprotein</fullName>
    </recommendedName>
    <alternativeName>
        <fullName>Pr55Gag</fullName>
    </alternativeName>
    <component>
        <recommendedName>
            <fullName>Matrix protein p17</fullName>
            <shortName>MA</shortName>
        </recommendedName>
    </component>
    <component>
        <recommendedName>
            <fullName>Capsid protein p24</fullName>
            <shortName>CA</shortName>
        </recommendedName>
    </component>
    <component>
        <recommendedName>
            <fullName evidence="6">Spacer peptide 1</fullName>
            <shortName>SP1</shortName>
        </recommendedName>
        <alternativeName>
            <fullName>p2</fullName>
        </alternativeName>
    </component>
    <component>
        <recommendedName>
            <fullName>Nucleocapsid protein p7</fullName>
            <shortName>NC</shortName>
        </recommendedName>
    </component>
    <component>
        <recommendedName>
            <fullName evidence="6">Spacer peptide 2</fullName>
            <shortName>SP2</shortName>
        </recommendedName>
        <alternativeName>
            <fullName>p1</fullName>
        </alternativeName>
    </component>
    <component>
        <recommendedName>
            <fullName>p6-gag</fullName>
        </recommendedName>
    </component>
</protein>
<evidence type="ECO:0000250" key="1"/>
<evidence type="ECO:0000250" key="2">
    <source>
        <dbReference type="UniProtKB" id="P03347"/>
    </source>
</evidence>
<evidence type="ECO:0000250" key="3">
    <source>
        <dbReference type="UniProtKB" id="P03348"/>
    </source>
</evidence>
<evidence type="ECO:0000250" key="4">
    <source>
        <dbReference type="UniProtKB" id="P03349"/>
    </source>
</evidence>
<evidence type="ECO:0000250" key="5">
    <source>
        <dbReference type="UniProtKB" id="P04591"/>
    </source>
</evidence>
<evidence type="ECO:0000250" key="6">
    <source>
        <dbReference type="UniProtKB" id="P12493"/>
    </source>
</evidence>
<evidence type="ECO:0000250" key="7">
    <source>
        <dbReference type="UniProtKB" id="P12497"/>
    </source>
</evidence>
<evidence type="ECO:0000255" key="8">
    <source>
        <dbReference type="PROSITE-ProRule" id="PRU00047"/>
    </source>
</evidence>
<evidence type="ECO:0000256" key="9">
    <source>
        <dbReference type="SAM" id="MobiDB-lite"/>
    </source>
</evidence>
<evidence type="ECO:0000305" key="10"/>
<organismHost>
    <name type="scientific">Homo sapiens</name>
    <name type="common">Human</name>
    <dbReference type="NCBI Taxonomy" id="9606"/>
</organismHost>
<reference key="1">
    <citation type="journal article" date="1986" name="Cell">
        <title>Genetic variability of the AIDS virus: nucleotide sequence analysis of two isolates from African patients.</title>
        <authorList>
            <person name="Alizon M."/>
            <person name="Wain-Hobson S."/>
            <person name="Montagnier L."/>
            <person name="Sonigo P."/>
        </authorList>
    </citation>
    <scope>NUCLEOTIDE SEQUENCE [GENOMIC RNA]</scope>
</reference>
<reference key="2">
    <citation type="journal article" date="2003" name="Biochim. Biophys. Acta">
        <title>Role of HIV-1 Gag domains in viral assembly.</title>
        <authorList>
            <person name="Scarlata S."/>
            <person name="Carter C."/>
        </authorList>
    </citation>
    <scope>REVIEW</scope>
</reference>
<organism>
    <name type="scientific">Human immunodeficiency virus type 1 group M subtype A (isolate MAL)</name>
    <name type="common">HIV-1</name>
    <dbReference type="NCBI Taxonomy" id="11697"/>
    <lineage>
        <taxon>Viruses</taxon>
        <taxon>Riboviria</taxon>
        <taxon>Pararnavirae</taxon>
        <taxon>Artverviricota</taxon>
        <taxon>Revtraviricetes</taxon>
        <taxon>Ortervirales</taxon>
        <taxon>Retroviridae</taxon>
        <taxon>Orthoretrovirinae</taxon>
        <taxon>Lentivirus</taxon>
        <taxon>Human immunodeficiency virus type 1</taxon>
    </lineage>
</organism>
<gene>
    <name type="primary">gag</name>
</gene>
<dbReference type="EMBL" id="X04415">
    <property type="protein sequence ID" value="CAA28011.1"/>
    <property type="molecule type" value="Genomic_RNA"/>
</dbReference>
<dbReference type="PIR" id="T01667">
    <property type="entry name" value="T01667"/>
</dbReference>
<dbReference type="SMR" id="P04594"/>
<dbReference type="PRO" id="PR:P04594"/>
<dbReference type="Proteomes" id="UP000007696">
    <property type="component" value="Genome"/>
</dbReference>
<dbReference type="GO" id="GO:0042025">
    <property type="term" value="C:host cell nucleus"/>
    <property type="evidence" value="ECO:0007669"/>
    <property type="project" value="UniProtKB-SubCell"/>
</dbReference>
<dbReference type="GO" id="GO:0020002">
    <property type="term" value="C:host cell plasma membrane"/>
    <property type="evidence" value="ECO:0007669"/>
    <property type="project" value="UniProtKB-SubCell"/>
</dbReference>
<dbReference type="GO" id="GO:0072494">
    <property type="term" value="C:host multivesicular body"/>
    <property type="evidence" value="ECO:0007669"/>
    <property type="project" value="UniProtKB-SubCell"/>
</dbReference>
<dbReference type="GO" id="GO:0016020">
    <property type="term" value="C:membrane"/>
    <property type="evidence" value="ECO:0007669"/>
    <property type="project" value="UniProtKB-KW"/>
</dbReference>
<dbReference type="GO" id="GO:0019013">
    <property type="term" value="C:viral nucleocapsid"/>
    <property type="evidence" value="ECO:0007669"/>
    <property type="project" value="UniProtKB-KW"/>
</dbReference>
<dbReference type="GO" id="GO:0055036">
    <property type="term" value="C:virion membrane"/>
    <property type="evidence" value="ECO:0007669"/>
    <property type="project" value="UniProtKB-SubCell"/>
</dbReference>
<dbReference type="GO" id="GO:0003723">
    <property type="term" value="F:RNA binding"/>
    <property type="evidence" value="ECO:0007669"/>
    <property type="project" value="UniProtKB-KW"/>
</dbReference>
<dbReference type="GO" id="GO:0005198">
    <property type="term" value="F:structural molecule activity"/>
    <property type="evidence" value="ECO:0007669"/>
    <property type="project" value="InterPro"/>
</dbReference>
<dbReference type="GO" id="GO:0008270">
    <property type="term" value="F:zinc ion binding"/>
    <property type="evidence" value="ECO:0007669"/>
    <property type="project" value="UniProtKB-KW"/>
</dbReference>
<dbReference type="GO" id="GO:0039702">
    <property type="term" value="P:viral budding via host ESCRT complex"/>
    <property type="evidence" value="ECO:0007669"/>
    <property type="project" value="UniProtKB-KW"/>
</dbReference>
<dbReference type="GO" id="GO:0075523">
    <property type="term" value="P:viral translational frameshifting"/>
    <property type="evidence" value="ECO:0007669"/>
    <property type="project" value="UniProtKB-KW"/>
</dbReference>
<dbReference type="FunFam" id="1.10.1200.30:FF:000001">
    <property type="entry name" value="Gag polyprotein"/>
    <property type="match status" value="1"/>
</dbReference>
<dbReference type="FunFam" id="1.10.375.10:FF:000001">
    <property type="entry name" value="Gag polyprotein"/>
    <property type="match status" value="1"/>
</dbReference>
<dbReference type="FunFam" id="4.10.60.10:FF:000001">
    <property type="entry name" value="Gag polyprotein"/>
    <property type="match status" value="1"/>
</dbReference>
<dbReference type="Gene3D" id="1.10.1200.30">
    <property type="match status" value="1"/>
</dbReference>
<dbReference type="Gene3D" id="6.10.250.390">
    <property type="match status" value="1"/>
</dbReference>
<dbReference type="Gene3D" id="1.10.375.10">
    <property type="entry name" value="Human Immunodeficiency Virus Type 1 Capsid Protein"/>
    <property type="match status" value="1"/>
</dbReference>
<dbReference type="Gene3D" id="1.10.150.90">
    <property type="entry name" value="Immunodeficiency lentiviruses, gag gene matrix protein p17"/>
    <property type="match status" value="1"/>
</dbReference>
<dbReference type="Gene3D" id="1.20.5.760">
    <property type="entry name" value="Single helix bin"/>
    <property type="match status" value="1"/>
</dbReference>
<dbReference type="Gene3D" id="4.10.60.10">
    <property type="entry name" value="Zinc finger, CCHC-type"/>
    <property type="match status" value="1"/>
</dbReference>
<dbReference type="InterPro" id="IPR045345">
    <property type="entry name" value="Gag_p24_C"/>
</dbReference>
<dbReference type="InterPro" id="IPR014817">
    <property type="entry name" value="Gag_p6"/>
</dbReference>
<dbReference type="InterPro" id="IPR000071">
    <property type="entry name" value="Lentvrl_matrix_N"/>
</dbReference>
<dbReference type="InterPro" id="IPR012344">
    <property type="entry name" value="Matrix_HIV/RSV_N"/>
</dbReference>
<dbReference type="InterPro" id="IPR050195">
    <property type="entry name" value="Primate_lentivir_Gag_pol-like"/>
</dbReference>
<dbReference type="InterPro" id="IPR008916">
    <property type="entry name" value="Retrov_capsid_C"/>
</dbReference>
<dbReference type="InterPro" id="IPR008919">
    <property type="entry name" value="Retrov_capsid_N"/>
</dbReference>
<dbReference type="InterPro" id="IPR010999">
    <property type="entry name" value="Retrovr_matrix"/>
</dbReference>
<dbReference type="InterPro" id="IPR001878">
    <property type="entry name" value="Znf_CCHC"/>
</dbReference>
<dbReference type="InterPro" id="IPR036875">
    <property type="entry name" value="Znf_CCHC_sf"/>
</dbReference>
<dbReference type="PANTHER" id="PTHR40389:SF4">
    <property type="match status" value="1"/>
</dbReference>
<dbReference type="PANTHER" id="PTHR40389">
    <property type="entry name" value="ENDOGENOUS RETROVIRUS GROUP K MEMBER 24 GAG POLYPROTEIN-RELATED"/>
    <property type="match status" value="1"/>
</dbReference>
<dbReference type="Pfam" id="PF00540">
    <property type="entry name" value="Gag_p17"/>
    <property type="match status" value="1"/>
</dbReference>
<dbReference type="Pfam" id="PF19317">
    <property type="entry name" value="Gag_p24_C"/>
    <property type="match status" value="1"/>
</dbReference>
<dbReference type="Pfam" id="PF08705">
    <property type="entry name" value="Gag_p6"/>
    <property type="match status" value="1"/>
</dbReference>
<dbReference type="Pfam" id="PF00098">
    <property type="entry name" value="zf-CCHC"/>
    <property type="match status" value="2"/>
</dbReference>
<dbReference type="PRINTS" id="PR00234">
    <property type="entry name" value="HIV1MATRIX"/>
</dbReference>
<dbReference type="SMART" id="SM00343">
    <property type="entry name" value="ZnF_C2HC"/>
    <property type="match status" value="2"/>
</dbReference>
<dbReference type="SUPFAM" id="SSF47836">
    <property type="entry name" value="Retroviral matrix proteins"/>
    <property type="match status" value="1"/>
</dbReference>
<dbReference type="SUPFAM" id="SSF47353">
    <property type="entry name" value="Retrovirus capsid dimerization domain-like"/>
    <property type="match status" value="1"/>
</dbReference>
<dbReference type="SUPFAM" id="SSF47943">
    <property type="entry name" value="Retrovirus capsid protein, N-terminal core domain"/>
    <property type="match status" value="1"/>
</dbReference>
<dbReference type="SUPFAM" id="SSF57756">
    <property type="entry name" value="Retrovirus zinc finger-like domains"/>
    <property type="match status" value="1"/>
</dbReference>
<dbReference type="PROSITE" id="PS50158">
    <property type="entry name" value="ZF_CCHC"/>
    <property type="match status" value="2"/>
</dbReference>
<feature type="initiator methionine" description="Removed; by host" evidence="1">
    <location>
        <position position="1"/>
    </location>
</feature>
<feature type="chain" id="PRO_0000261220" description="Gag polyprotein">
    <location>
        <begin position="2"/>
        <end position="505"/>
    </location>
</feature>
<feature type="chain" id="PRO_0000038553" description="Matrix protein p17" evidence="1">
    <location>
        <begin position="2"/>
        <end position="138"/>
    </location>
</feature>
<feature type="chain" id="PRO_0000038554" description="Capsid protein p24" evidence="1">
    <location>
        <begin position="139"/>
        <end position="369"/>
    </location>
</feature>
<feature type="peptide" id="PRO_0000038555" description="Spacer peptide 1" evidence="1">
    <location>
        <begin position="370"/>
        <end position="384"/>
    </location>
</feature>
<feature type="chain" id="PRO_0000038556" description="Nucleocapsid protein p7" evidence="1">
    <location>
        <begin position="385"/>
        <end position="438"/>
    </location>
</feature>
<feature type="peptide" id="PRO_0000038557" description="Spacer peptide 2" evidence="1">
    <location>
        <begin position="439"/>
        <end position="454"/>
    </location>
</feature>
<feature type="chain" id="PRO_0000038558" description="p6-gag" evidence="1">
    <location>
        <begin position="455"/>
        <end position="505"/>
    </location>
</feature>
<feature type="zinc finger region" description="CCHC-type 1" evidence="8">
    <location>
        <begin position="396"/>
        <end position="413"/>
    </location>
</feature>
<feature type="zinc finger region" description="CCHC-type 2" evidence="8">
    <location>
        <begin position="417"/>
        <end position="434"/>
    </location>
</feature>
<feature type="region of interest" description="Interaction with Gp41" evidence="6">
    <location>
        <begin position="7"/>
        <end position="31"/>
    </location>
</feature>
<feature type="region of interest" description="Interaction with host CALM1" evidence="5">
    <location>
        <begin position="8"/>
        <end position="43"/>
    </location>
</feature>
<feature type="region of interest" description="Interaction with host AP3D1" evidence="7">
    <location>
        <begin position="12"/>
        <end position="19"/>
    </location>
</feature>
<feature type="region of interest" description="Interaction with membrane phosphatidylinositol 4,5-bisphosphate and RNA" evidence="6">
    <location>
        <begin position="14"/>
        <end position="33"/>
    </location>
</feature>
<feature type="region of interest" description="Interaction with membrane phosphatidylinositol 4,5-bisphosphate" evidence="6">
    <location>
        <begin position="73"/>
        <end position="77"/>
    </location>
</feature>
<feature type="region of interest" description="Interaction with host PPIA/CYPA and NUP153" evidence="6">
    <location>
        <begin position="195"/>
        <end position="233"/>
    </location>
</feature>
<feature type="region of interest" description="PPIA/CYPA-binding loop" evidence="5">
    <location>
        <begin position="223"/>
        <end position="231"/>
    </location>
</feature>
<feature type="region of interest" description="Dimerization/Multimerization of capsid protein p24" evidence="5">
    <location>
        <begin position="283"/>
        <end position="369"/>
    </location>
</feature>
<feature type="region of interest" description="Disordered" evidence="9">
    <location>
        <begin position="448"/>
        <end position="486"/>
    </location>
</feature>
<feature type="short sequence motif" description="Nuclear export signal" evidence="1">
    <location>
        <begin position="16"/>
        <end position="22"/>
    </location>
</feature>
<feature type="short sequence motif" description="Nuclear localization signal" evidence="1">
    <location>
        <begin position="26"/>
        <end position="32"/>
    </location>
</feature>
<feature type="short sequence motif" description="PTAP/PSAP motif">
    <location>
        <begin position="461"/>
        <end position="464"/>
    </location>
</feature>
<feature type="short sequence motif" description="LYPX(n)L motif">
    <location>
        <begin position="488"/>
        <end position="497"/>
    </location>
</feature>
<feature type="compositionally biased region" description="Basic and acidic residues" evidence="9">
    <location>
        <begin position="473"/>
        <end position="486"/>
    </location>
</feature>
<feature type="site" description="Cleavage; by viral protease" evidence="1">
    <location>
        <begin position="138"/>
        <end position="139"/>
    </location>
</feature>
<feature type="site" description="Cleavage; by viral protease" evidence="1">
    <location>
        <begin position="369"/>
        <end position="370"/>
    </location>
</feature>
<feature type="site" description="Cleavage; by viral protease" evidence="1">
    <location>
        <begin position="384"/>
        <end position="385"/>
    </location>
</feature>
<feature type="site" description="Cleavage; by viral protease" evidence="1">
    <location>
        <begin position="438"/>
        <end position="439"/>
    </location>
</feature>
<feature type="site" description="Cleavage; by viral protease" evidence="1">
    <location>
        <begin position="454"/>
        <end position="455"/>
    </location>
</feature>
<feature type="modified residue" description="Phosphoserine; by host MAPK1" evidence="6">
    <location>
        <position position="154"/>
    </location>
</feature>
<feature type="modified residue" description="Asymmetric dimethylarginine; in Nucleocapsid protein p7; by host PRMT6" evidence="1">
    <location>
        <position position="415"/>
    </location>
</feature>
<feature type="lipid moiety-binding region" description="N-myristoyl glycine; by host" evidence="1">
    <location>
        <position position="2"/>
    </location>
</feature>